<reference key="1">
    <citation type="journal article" date="2003" name="Nucleic Acids Res.">
        <title>The complete genome sequence and analysis of Corynebacterium diphtheriae NCTC13129.</title>
        <authorList>
            <person name="Cerdeno-Tarraga A.-M."/>
            <person name="Efstratiou A."/>
            <person name="Dover L.G."/>
            <person name="Holden M.T.G."/>
            <person name="Pallen M.J."/>
            <person name="Bentley S.D."/>
            <person name="Besra G.S."/>
            <person name="Churcher C.M."/>
            <person name="James K.D."/>
            <person name="De Zoysa A."/>
            <person name="Chillingworth T."/>
            <person name="Cronin A."/>
            <person name="Dowd L."/>
            <person name="Feltwell T."/>
            <person name="Hamlin N."/>
            <person name="Holroyd S."/>
            <person name="Jagels K."/>
            <person name="Moule S."/>
            <person name="Quail M.A."/>
            <person name="Rabbinowitsch E."/>
            <person name="Rutherford K.M."/>
            <person name="Thomson N.R."/>
            <person name="Unwin L."/>
            <person name="Whitehead S."/>
            <person name="Barrell B.G."/>
            <person name="Parkhill J."/>
        </authorList>
    </citation>
    <scope>NUCLEOTIDE SEQUENCE [LARGE SCALE GENOMIC DNA]</scope>
    <source>
        <strain>ATCC 700971 / NCTC 13129 / Biotype gravis</strain>
    </source>
</reference>
<feature type="chain" id="PRO_0000184240" description="Ribosomal RNA small subunit methyltransferase G">
    <location>
        <begin position="1"/>
        <end position="223"/>
    </location>
</feature>
<feature type="binding site" evidence="1">
    <location>
        <position position="83"/>
    </location>
    <ligand>
        <name>S-adenosyl-L-methionine</name>
        <dbReference type="ChEBI" id="CHEBI:59789"/>
    </ligand>
</feature>
<feature type="binding site" evidence="1">
    <location>
        <position position="88"/>
    </location>
    <ligand>
        <name>S-adenosyl-L-methionine</name>
        <dbReference type="ChEBI" id="CHEBI:59789"/>
    </ligand>
</feature>
<feature type="binding site" evidence="1">
    <location>
        <begin position="134"/>
        <end position="135"/>
    </location>
    <ligand>
        <name>S-adenosyl-L-methionine</name>
        <dbReference type="ChEBI" id="CHEBI:59789"/>
    </ligand>
</feature>
<feature type="binding site" evidence="1">
    <location>
        <position position="152"/>
    </location>
    <ligand>
        <name>S-adenosyl-L-methionine</name>
        <dbReference type="ChEBI" id="CHEBI:59789"/>
    </ligand>
</feature>
<accession>Q6NE98</accession>
<keyword id="KW-0963">Cytoplasm</keyword>
<keyword id="KW-0489">Methyltransferase</keyword>
<keyword id="KW-1185">Reference proteome</keyword>
<keyword id="KW-0698">rRNA processing</keyword>
<keyword id="KW-0949">S-adenosyl-L-methionine</keyword>
<keyword id="KW-0808">Transferase</keyword>
<comment type="function">
    <text evidence="1">Specifically methylates the N7 position of guanine in position 518 of 16S rRNA.</text>
</comment>
<comment type="subcellular location">
    <subcellularLocation>
        <location evidence="1">Cytoplasm</location>
    </subcellularLocation>
</comment>
<comment type="similarity">
    <text evidence="1">Belongs to the methyltransferase superfamily. RNA methyltransferase RsmG family.</text>
</comment>
<sequence>MWGYTVEKGWFHVKHEEIESIASHVFGGNVDKAYAYHELLATDGSTRGFIGPREVPKLWSRHLLNCAVIGEAMDENIRVADIGSGAGLPGIPLAIARPDLTITLIEPLLKRSVFLGEVKEKLELDNVTVIRGRAEEKAVREQLGLVDVATSRAVAPLGKLAGWSLPLVRLGGKMIAMKGSSVHEELERDEKMIWKAGGGKVKIFSVGEVLEEPTTLISIRKVR</sequence>
<protein>
    <recommendedName>
        <fullName evidence="1">Ribosomal RNA small subunit methyltransferase G</fullName>
        <ecNumber evidence="1">2.1.1.-</ecNumber>
    </recommendedName>
    <alternativeName>
        <fullName evidence="1">16S rRNA 7-methylguanosine methyltransferase</fullName>
        <shortName evidence="1">16S rRNA m7G methyltransferase</shortName>
    </alternativeName>
</protein>
<organism>
    <name type="scientific">Corynebacterium diphtheriae (strain ATCC 700971 / NCTC 13129 / Biotype gravis)</name>
    <dbReference type="NCBI Taxonomy" id="257309"/>
    <lineage>
        <taxon>Bacteria</taxon>
        <taxon>Bacillati</taxon>
        <taxon>Actinomycetota</taxon>
        <taxon>Actinomycetes</taxon>
        <taxon>Mycobacteriales</taxon>
        <taxon>Corynebacteriaceae</taxon>
        <taxon>Corynebacterium</taxon>
    </lineage>
</organism>
<evidence type="ECO:0000255" key="1">
    <source>
        <dbReference type="HAMAP-Rule" id="MF_00074"/>
    </source>
</evidence>
<gene>
    <name evidence="1" type="primary">rsmG</name>
    <name type="ordered locus">DIP2378</name>
</gene>
<dbReference type="EC" id="2.1.1.-" evidence="1"/>
<dbReference type="EMBL" id="BX248361">
    <property type="protein sequence ID" value="CAE50900.1"/>
    <property type="molecule type" value="Genomic_DNA"/>
</dbReference>
<dbReference type="SMR" id="Q6NE98"/>
<dbReference type="STRING" id="257309.DIP2378"/>
<dbReference type="KEGG" id="cdi:DIP2378"/>
<dbReference type="HOGENOM" id="CLU_065341_5_0_11"/>
<dbReference type="Proteomes" id="UP000002198">
    <property type="component" value="Chromosome"/>
</dbReference>
<dbReference type="GO" id="GO:0005829">
    <property type="term" value="C:cytosol"/>
    <property type="evidence" value="ECO:0007669"/>
    <property type="project" value="TreeGrafter"/>
</dbReference>
<dbReference type="GO" id="GO:0070043">
    <property type="term" value="F:rRNA (guanine-N7-)-methyltransferase activity"/>
    <property type="evidence" value="ECO:0007669"/>
    <property type="project" value="UniProtKB-UniRule"/>
</dbReference>
<dbReference type="Gene3D" id="3.40.50.150">
    <property type="entry name" value="Vaccinia Virus protein VP39"/>
    <property type="match status" value="1"/>
</dbReference>
<dbReference type="HAMAP" id="MF_00074">
    <property type="entry name" value="16SrRNA_methyltr_G"/>
    <property type="match status" value="1"/>
</dbReference>
<dbReference type="InterPro" id="IPR003682">
    <property type="entry name" value="rRNA_ssu_MeTfrase_G"/>
</dbReference>
<dbReference type="InterPro" id="IPR029063">
    <property type="entry name" value="SAM-dependent_MTases_sf"/>
</dbReference>
<dbReference type="NCBIfam" id="TIGR00138">
    <property type="entry name" value="rsmG_gidB"/>
    <property type="match status" value="1"/>
</dbReference>
<dbReference type="PANTHER" id="PTHR31760">
    <property type="entry name" value="S-ADENOSYL-L-METHIONINE-DEPENDENT METHYLTRANSFERASES SUPERFAMILY PROTEIN"/>
    <property type="match status" value="1"/>
</dbReference>
<dbReference type="PANTHER" id="PTHR31760:SF0">
    <property type="entry name" value="S-ADENOSYL-L-METHIONINE-DEPENDENT METHYLTRANSFERASES SUPERFAMILY PROTEIN"/>
    <property type="match status" value="1"/>
</dbReference>
<dbReference type="Pfam" id="PF02527">
    <property type="entry name" value="GidB"/>
    <property type="match status" value="1"/>
</dbReference>
<dbReference type="SUPFAM" id="SSF53335">
    <property type="entry name" value="S-adenosyl-L-methionine-dependent methyltransferases"/>
    <property type="match status" value="1"/>
</dbReference>
<name>RSMG_CORDI</name>
<proteinExistence type="inferred from homology"/>